<evidence type="ECO:0000250" key="1">
    <source>
        <dbReference type="UniProtKB" id="Q9CRD0"/>
    </source>
</evidence>
<evidence type="ECO:0000250" key="2">
    <source>
        <dbReference type="UniProtKB" id="Q9NX40"/>
    </source>
</evidence>
<evidence type="ECO:0000256" key="3">
    <source>
        <dbReference type="SAM" id="MobiDB-lite"/>
    </source>
</evidence>
<evidence type="ECO:0000305" key="4"/>
<comment type="function">
    <text evidence="1">Maintains stem cell potency (By similarity). Increases STAT3 phosphorylation and controls ERK phosphorylation (By similarity). May act as a scaffold, increasing STAT3 recruitment onto endosomes (By similarity).</text>
</comment>
<comment type="subunit">
    <text evidence="1 2">Interacts with OCIAD2 (By similarity). Interacts with STAT3.</text>
</comment>
<comment type="subcellular location">
    <subcellularLocation>
        <location evidence="1">Endosome</location>
    </subcellularLocation>
</comment>
<comment type="domain">
    <text evidence="1">The OCIA domain is necessary and sufficient for endosomal localization.</text>
</comment>
<comment type="miscellaneous">
    <text>'Asrij' stands for 'blood' in Sanskrit as this protein is strongly expressed in blood vessels.</text>
</comment>
<comment type="similarity">
    <text evidence="4">Belongs to the OCIAD1 family.</text>
</comment>
<organism>
    <name type="scientific">Pongo abelii</name>
    <name type="common">Sumatran orangutan</name>
    <name type="synonym">Pongo pygmaeus abelii</name>
    <dbReference type="NCBI Taxonomy" id="9601"/>
    <lineage>
        <taxon>Eukaryota</taxon>
        <taxon>Metazoa</taxon>
        <taxon>Chordata</taxon>
        <taxon>Craniata</taxon>
        <taxon>Vertebrata</taxon>
        <taxon>Euteleostomi</taxon>
        <taxon>Mammalia</taxon>
        <taxon>Eutheria</taxon>
        <taxon>Euarchontoglires</taxon>
        <taxon>Primates</taxon>
        <taxon>Haplorrhini</taxon>
        <taxon>Catarrhini</taxon>
        <taxon>Hominidae</taxon>
        <taxon>Pongo</taxon>
    </lineage>
</organism>
<dbReference type="EMBL" id="CR858070">
    <property type="protein sequence ID" value="CAH90309.1"/>
    <property type="molecule type" value="mRNA"/>
</dbReference>
<dbReference type="RefSeq" id="NP_001125142.1">
    <property type="nucleotide sequence ID" value="NM_001131670.1"/>
</dbReference>
<dbReference type="RefSeq" id="XP_009238215.1">
    <property type="nucleotide sequence ID" value="XM_009239940.1"/>
</dbReference>
<dbReference type="RefSeq" id="XP_009238216.1">
    <property type="nucleotide sequence ID" value="XM_009239941.4"/>
</dbReference>
<dbReference type="RefSeq" id="XP_009238217.1">
    <property type="nucleotide sequence ID" value="XM_009239942.4"/>
</dbReference>
<dbReference type="RefSeq" id="XP_009238218.1">
    <property type="nucleotide sequence ID" value="XM_009239943.4"/>
</dbReference>
<dbReference type="RefSeq" id="XP_009238219.1">
    <property type="nucleotide sequence ID" value="XM_009239944.1"/>
</dbReference>
<dbReference type="RefSeq" id="XP_009238220.1">
    <property type="nucleotide sequence ID" value="XM_009239945.1"/>
</dbReference>
<dbReference type="RefSeq" id="XP_009238221.1">
    <property type="nucleotide sequence ID" value="XM_009239946.1"/>
</dbReference>
<dbReference type="FunCoup" id="Q5RD48">
    <property type="interactions" value="2392"/>
</dbReference>
<dbReference type="STRING" id="9601.ENSPPYP00000016445"/>
<dbReference type="Ensembl" id="ENSPPYT00000041742.1">
    <property type="protein sequence ID" value="ENSPPYP00000027782.1"/>
    <property type="gene ID" value="ENSPPYG00000014721.3"/>
</dbReference>
<dbReference type="GeneID" id="100172028"/>
<dbReference type="KEGG" id="pon:100172028"/>
<dbReference type="CTD" id="54940"/>
<dbReference type="eggNOG" id="ENOG502RXQR">
    <property type="taxonomic scope" value="Eukaryota"/>
</dbReference>
<dbReference type="GeneTree" id="ENSGT00530000063690"/>
<dbReference type="HOGENOM" id="CLU_083038_0_0_1"/>
<dbReference type="InParanoid" id="Q5RD48"/>
<dbReference type="OMA" id="TYEVMLP"/>
<dbReference type="OrthoDB" id="6513616at2759"/>
<dbReference type="TreeFam" id="TF327106"/>
<dbReference type="Proteomes" id="UP000001595">
    <property type="component" value="Chromosome 4"/>
</dbReference>
<dbReference type="GO" id="GO:0005768">
    <property type="term" value="C:endosome"/>
    <property type="evidence" value="ECO:0000250"/>
    <property type="project" value="UniProtKB"/>
</dbReference>
<dbReference type="GO" id="GO:2000736">
    <property type="term" value="P:regulation of stem cell differentiation"/>
    <property type="evidence" value="ECO:0000250"/>
    <property type="project" value="UniProtKB"/>
</dbReference>
<dbReference type="InterPro" id="IPR040187">
    <property type="entry name" value="OCAD1/2"/>
</dbReference>
<dbReference type="InterPro" id="IPR009764">
    <property type="entry name" value="OCIA_dom"/>
</dbReference>
<dbReference type="PANTHER" id="PTHR13336:SF4">
    <property type="entry name" value="OCIA DOMAIN-CONTAINING PROTEIN 1"/>
    <property type="match status" value="1"/>
</dbReference>
<dbReference type="PANTHER" id="PTHR13336">
    <property type="entry name" value="OVARIAN CARCINOMA IMMUNOREACTIVE ANTIGEN"/>
    <property type="match status" value="1"/>
</dbReference>
<dbReference type="Pfam" id="PF07051">
    <property type="entry name" value="OCIA"/>
    <property type="match status" value="1"/>
</dbReference>
<feature type="chain" id="PRO_0000299383" description="OCIA domain-containing protein 1">
    <location>
        <begin position="1"/>
        <end position="245"/>
    </location>
</feature>
<feature type="domain" description="OCIA">
    <location>
        <begin position="1"/>
        <end position="112"/>
    </location>
</feature>
<feature type="region of interest" description="Disordered" evidence="3">
    <location>
        <begin position="111"/>
        <end position="142"/>
    </location>
</feature>
<feature type="region of interest" description="Disordered" evidence="3">
    <location>
        <begin position="164"/>
        <end position="245"/>
    </location>
</feature>
<feature type="compositionally biased region" description="Polar residues" evidence="3">
    <location>
        <begin position="164"/>
        <end position="174"/>
    </location>
</feature>
<feature type="compositionally biased region" description="Basic and acidic residues" evidence="3">
    <location>
        <begin position="190"/>
        <end position="210"/>
    </location>
</feature>
<feature type="compositionally biased region" description="Basic and acidic residues" evidence="3">
    <location>
        <begin position="224"/>
        <end position="238"/>
    </location>
</feature>
<feature type="modified residue" description="Phosphoserine" evidence="2">
    <location>
        <position position="108"/>
    </location>
</feature>
<feature type="modified residue" description="Phosphoserine" evidence="2">
    <location>
        <position position="116"/>
    </location>
</feature>
<feature type="modified residue" description="Phosphoserine" evidence="2">
    <location>
        <position position="123"/>
    </location>
</feature>
<feature type="modified residue" description="Phosphoserine" evidence="2">
    <location>
        <position position="191"/>
    </location>
</feature>
<protein>
    <recommendedName>
        <fullName>OCIA domain-containing protein 1</fullName>
    </recommendedName>
</protein>
<name>OCAD1_PONAB</name>
<accession>Q5RD48</accession>
<sequence length="245" mass="27687">MNGRADFREPNAEVPRPIPHIGPDYIPTEEERRVFAECNDESFWFRSVPLAATSMLITQGLISKGILSSHPKYGSIPKLIFACIMGYFAGKLSYVKTCQEKFKKLENSPLGEALRSGQARRSSPPGHYYQKSKYDSNVSGQSSFVTSPAADNIEMLPHYEPIPFSSSMNESAPTGITDHIVQGPDPNLEESPKRKNITYEELRNKNRESYEVSLTQKTDPSVRPMHERVPKKEVKVNKYGDTWDE</sequence>
<reference key="1">
    <citation type="submission" date="2004-11" db="EMBL/GenBank/DDBJ databases">
        <authorList>
            <consortium name="The German cDNA consortium"/>
        </authorList>
    </citation>
    <scope>NUCLEOTIDE SEQUENCE [LARGE SCALE MRNA]</scope>
    <source>
        <tissue>Kidney</tissue>
    </source>
</reference>
<proteinExistence type="evidence at transcript level"/>
<keyword id="KW-0967">Endosome</keyword>
<keyword id="KW-0597">Phosphoprotein</keyword>
<keyword id="KW-1185">Reference proteome</keyword>
<gene>
    <name type="primary">OCIAD1</name>
    <name evidence="1" type="synonym">Asrij</name>
</gene>